<accession>Q04EG2</accession>
<keyword id="KW-0378">Hydrolase</keyword>
<keyword id="KW-1185">Reference proteome</keyword>
<sequence length="230" mass="25262">MKITYFGQSAFQIKTGKTTILIDPFLTGNKHTKVDPFDLNPEYILLTHAHQDHTGDSFDIARRTGATIITQTDYAQYINDILPEAKGCHAEGINFGGTFSADDFSVKLYPAWHTDARMVGNALVPVGVAAGMALTIEDKLIYDTGDTALFSDLKLVARKHPVDLALICIGGHFTMDADDALVAADFLQAKHVIPTHYNTFPSIQADPQKFVEQLPTGVGIIPDFDKEFDF</sequence>
<organism>
    <name type="scientific">Oenococcus oeni (strain ATCC BAA-331 / PSU-1)</name>
    <dbReference type="NCBI Taxonomy" id="203123"/>
    <lineage>
        <taxon>Bacteria</taxon>
        <taxon>Bacillati</taxon>
        <taxon>Bacillota</taxon>
        <taxon>Bacilli</taxon>
        <taxon>Lactobacillales</taxon>
        <taxon>Lactobacillaceae</taxon>
        <taxon>Oenococcus</taxon>
    </lineage>
</organism>
<proteinExistence type="inferred from homology"/>
<evidence type="ECO:0000255" key="1">
    <source>
        <dbReference type="HAMAP-Rule" id="MF_00457"/>
    </source>
</evidence>
<reference key="1">
    <citation type="journal article" date="2006" name="Proc. Natl. Acad. Sci. U.S.A.">
        <title>Comparative genomics of the lactic acid bacteria.</title>
        <authorList>
            <person name="Makarova K.S."/>
            <person name="Slesarev A."/>
            <person name="Wolf Y.I."/>
            <person name="Sorokin A."/>
            <person name="Mirkin B."/>
            <person name="Koonin E.V."/>
            <person name="Pavlov A."/>
            <person name="Pavlova N."/>
            <person name="Karamychev V."/>
            <person name="Polouchine N."/>
            <person name="Shakhova V."/>
            <person name="Grigoriev I."/>
            <person name="Lou Y."/>
            <person name="Rohksar D."/>
            <person name="Lucas S."/>
            <person name="Huang K."/>
            <person name="Goodstein D.M."/>
            <person name="Hawkins T."/>
            <person name="Plengvidhya V."/>
            <person name="Welker D."/>
            <person name="Hughes J."/>
            <person name="Goh Y."/>
            <person name="Benson A."/>
            <person name="Baldwin K."/>
            <person name="Lee J.-H."/>
            <person name="Diaz-Muniz I."/>
            <person name="Dosti B."/>
            <person name="Smeianov V."/>
            <person name="Wechter W."/>
            <person name="Barabote R."/>
            <person name="Lorca G."/>
            <person name="Altermann E."/>
            <person name="Barrangou R."/>
            <person name="Ganesan B."/>
            <person name="Xie Y."/>
            <person name="Rawsthorne H."/>
            <person name="Tamir D."/>
            <person name="Parker C."/>
            <person name="Breidt F."/>
            <person name="Broadbent J.R."/>
            <person name="Hutkins R."/>
            <person name="O'Sullivan D."/>
            <person name="Steele J."/>
            <person name="Unlu G."/>
            <person name="Saier M.H. Jr."/>
            <person name="Klaenhammer T."/>
            <person name="Richardson P."/>
            <person name="Kozyavkin S."/>
            <person name="Weimer B.C."/>
            <person name="Mills D.A."/>
        </authorList>
    </citation>
    <scope>NUCLEOTIDE SEQUENCE [LARGE SCALE GENOMIC DNA]</scope>
    <source>
        <strain>ATCC BAA-331 / PSU-1</strain>
    </source>
</reference>
<protein>
    <recommendedName>
        <fullName evidence="1">UPF0173 metal-dependent hydrolase OEOE_1287</fullName>
    </recommendedName>
</protein>
<feature type="chain" id="PRO_0000367195" description="UPF0173 metal-dependent hydrolase OEOE_1287">
    <location>
        <begin position="1"/>
        <end position="230"/>
    </location>
</feature>
<dbReference type="EMBL" id="CP000411">
    <property type="protein sequence ID" value="ABJ57160.1"/>
    <property type="molecule type" value="Genomic_DNA"/>
</dbReference>
<dbReference type="RefSeq" id="WP_002819156.1">
    <property type="nucleotide sequence ID" value="NC_008528.1"/>
</dbReference>
<dbReference type="SMR" id="Q04EG2"/>
<dbReference type="STRING" id="203123.OEOE_1287"/>
<dbReference type="KEGG" id="ooe:OEOE_1287"/>
<dbReference type="eggNOG" id="COG2220">
    <property type="taxonomic scope" value="Bacteria"/>
</dbReference>
<dbReference type="HOGENOM" id="CLU_070010_4_1_9"/>
<dbReference type="Proteomes" id="UP000000774">
    <property type="component" value="Chromosome"/>
</dbReference>
<dbReference type="GO" id="GO:0016787">
    <property type="term" value="F:hydrolase activity"/>
    <property type="evidence" value="ECO:0007669"/>
    <property type="project" value="UniProtKB-UniRule"/>
</dbReference>
<dbReference type="CDD" id="cd06262">
    <property type="entry name" value="metallo-hydrolase-like_MBL-fold"/>
    <property type="match status" value="1"/>
</dbReference>
<dbReference type="Gene3D" id="3.60.15.10">
    <property type="entry name" value="Ribonuclease Z/Hydroxyacylglutathione hydrolase-like"/>
    <property type="match status" value="1"/>
</dbReference>
<dbReference type="HAMAP" id="MF_00457">
    <property type="entry name" value="UPF0173"/>
    <property type="match status" value="1"/>
</dbReference>
<dbReference type="InterPro" id="IPR001279">
    <property type="entry name" value="Metallo-B-lactamas"/>
</dbReference>
<dbReference type="InterPro" id="IPR036866">
    <property type="entry name" value="RibonucZ/Hydroxyglut_hydro"/>
</dbReference>
<dbReference type="InterPro" id="IPR022877">
    <property type="entry name" value="UPF0173"/>
</dbReference>
<dbReference type="InterPro" id="IPR050114">
    <property type="entry name" value="UPF0173_UPF0282_UlaG_hydrolase"/>
</dbReference>
<dbReference type="NCBIfam" id="NF001911">
    <property type="entry name" value="PRK00685.1"/>
    <property type="match status" value="1"/>
</dbReference>
<dbReference type="PANTHER" id="PTHR43546:SF3">
    <property type="entry name" value="UPF0173 METAL-DEPENDENT HYDROLASE MJ1163"/>
    <property type="match status" value="1"/>
</dbReference>
<dbReference type="PANTHER" id="PTHR43546">
    <property type="entry name" value="UPF0173 METAL-DEPENDENT HYDROLASE MJ1163-RELATED"/>
    <property type="match status" value="1"/>
</dbReference>
<dbReference type="Pfam" id="PF12706">
    <property type="entry name" value="Lactamase_B_2"/>
    <property type="match status" value="1"/>
</dbReference>
<dbReference type="SMART" id="SM00849">
    <property type="entry name" value="Lactamase_B"/>
    <property type="match status" value="1"/>
</dbReference>
<dbReference type="SUPFAM" id="SSF56281">
    <property type="entry name" value="Metallo-hydrolase/oxidoreductase"/>
    <property type="match status" value="1"/>
</dbReference>
<comment type="similarity">
    <text evidence="1">Belongs to the UPF0173 family.</text>
</comment>
<name>Y1287_OENOB</name>
<gene>
    <name type="ordered locus">OEOE_1287</name>
</gene>